<comment type="function">
    <text evidence="1">One of the early assembly proteins it binds 23S rRNA. One of the proteins that surrounds the polypeptide exit tunnel on the outside of the ribosome. Forms the main docking site for trigger factor binding to the ribosome.</text>
</comment>
<comment type="subunit">
    <text evidence="1">Part of the 50S ribosomal subunit. Contacts protein L29, and trigger factor when it is bound to the ribosome.</text>
</comment>
<comment type="similarity">
    <text evidence="1">Belongs to the universal ribosomal protein uL23 family.</text>
</comment>
<accession>Q2NZY7</accession>
<reference key="1">
    <citation type="journal article" date="2005" name="Jpn. Agric. Res. Q.">
        <title>Genome sequence of Xanthomonas oryzae pv. oryzae suggests contribution of large numbers of effector genes and insertion sequences to its race diversity.</title>
        <authorList>
            <person name="Ochiai H."/>
            <person name="Inoue Y."/>
            <person name="Takeya M."/>
            <person name="Sasaki A."/>
            <person name="Kaku H."/>
        </authorList>
    </citation>
    <scope>NUCLEOTIDE SEQUENCE [LARGE SCALE GENOMIC DNA]</scope>
    <source>
        <strain>MAFF 311018</strain>
    </source>
</reference>
<keyword id="KW-0687">Ribonucleoprotein</keyword>
<keyword id="KW-0689">Ribosomal protein</keyword>
<keyword id="KW-0694">RNA-binding</keyword>
<keyword id="KW-0699">rRNA-binding</keyword>
<protein>
    <recommendedName>
        <fullName evidence="1">Large ribosomal subunit protein uL23</fullName>
    </recommendedName>
    <alternativeName>
        <fullName evidence="2">50S ribosomal protein L23</fullName>
    </alternativeName>
</protein>
<proteinExistence type="inferred from homology"/>
<gene>
    <name evidence="1" type="primary">rplW</name>
    <name type="ordered locus">XOO3385</name>
</gene>
<dbReference type="EMBL" id="AP008229">
    <property type="protein sequence ID" value="BAE70140.1"/>
    <property type="molecule type" value="Genomic_DNA"/>
</dbReference>
<dbReference type="RefSeq" id="WP_003486717.1">
    <property type="nucleotide sequence ID" value="NC_007705.1"/>
</dbReference>
<dbReference type="SMR" id="Q2NZY7"/>
<dbReference type="GeneID" id="77338711"/>
<dbReference type="KEGG" id="xom:XOO3385"/>
<dbReference type="HOGENOM" id="CLU_037562_3_1_6"/>
<dbReference type="GO" id="GO:1990904">
    <property type="term" value="C:ribonucleoprotein complex"/>
    <property type="evidence" value="ECO:0007669"/>
    <property type="project" value="UniProtKB-KW"/>
</dbReference>
<dbReference type="GO" id="GO:0005840">
    <property type="term" value="C:ribosome"/>
    <property type="evidence" value="ECO:0007669"/>
    <property type="project" value="UniProtKB-KW"/>
</dbReference>
<dbReference type="GO" id="GO:0019843">
    <property type="term" value="F:rRNA binding"/>
    <property type="evidence" value="ECO:0007669"/>
    <property type="project" value="UniProtKB-UniRule"/>
</dbReference>
<dbReference type="GO" id="GO:0003735">
    <property type="term" value="F:structural constituent of ribosome"/>
    <property type="evidence" value="ECO:0007669"/>
    <property type="project" value="InterPro"/>
</dbReference>
<dbReference type="GO" id="GO:0006412">
    <property type="term" value="P:translation"/>
    <property type="evidence" value="ECO:0007669"/>
    <property type="project" value="UniProtKB-UniRule"/>
</dbReference>
<dbReference type="FunFam" id="3.30.70.330:FF:000001">
    <property type="entry name" value="50S ribosomal protein L23"/>
    <property type="match status" value="1"/>
</dbReference>
<dbReference type="Gene3D" id="3.30.70.330">
    <property type="match status" value="1"/>
</dbReference>
<dbReference type="HAMAP" id="MF_01369_B">
    <property type="entry name" value="Ribosomal_uL23_B"/>
    <property type="match status" value="1"/>
</dbReference>
<dbReference type="InterPro" id="IPR012677">
    <property type="entry name" value="Nucleotide-bd_a/b_plait_sf"/>
</dbReference>
<dbReference type="InterPro" id="IPR013025">
    <property type="entry name" value="Ribosomal_uL23-like"/>
</dbReference>
<dbReference type="InterPro" id="IPR012678">
    <property type="entry name" value="Ribosomal_uL23/eL15/eS24_sf"/>
</dbReference>
<dbReference type="NCBIfam" id="NF004359">
    <property type="entry name" value="PRK05738.1-3"/>
    <property type="match status" value="1"/>
</dbReference>
<dbReference type="NCBIfam" id="NF004363">
    <property type="entry name" value="PRK05738.2-4"/>
    <property type="match status" value="1"/>
</dbReference>
<dbReference type="PANTHER" id="PTHR11620">
    <property type="entry name" value="60S RIBOSOMAL PROTEIN L23A"/>
    <property type="match status" value="1"/>
</dbReference>
<dbReference type="Pfam" id="PF00276">
    <property type="entry name" value="Ribosomal_L23"/>
    <property type="match status" value="1"/>
</dbReference>
<dbReference type="SUPFAM" id="SSF54189">
    <property type="entry name" value="Ribosomal proteins S24e, L23 and L15e"/>
    <property type="match status" value="1"/>
</dbReference>
<name>RL23_XANOM</name>
<evidence type="ECO:0000255" key="1">
    <source>
        <dbReference type="HAMAP-Rule" id="MF_01369"/>
    </source>
</evidence>
<evidence type="ECO:0000305" key="2"/>
<organism>
    <name type="scientific">Xanthomonas oryzae pv. oryzae (strain MAFF 311018)</name>
    <dbReference type="NCBI Taxonomy" id="342109"/>
    <lineage>
        <taxon>Bacteria</taxon>
        <taxon>Pseudomonadati</taxon>
        <taxon>Pseudomonadota</taxon>
        <taxon>Gammaproteobacteria</taxon>
        <taxon>Lysobacterales</taxon>
        <taxon>Lysobacteraceae</taxon>
        <taxon>Xanthomonas</taxon>
    </lineage>
</organism>
<feature type="chain" id="PRO_0000272879" description="Large ribosomal subunit protein uL23">
    <location>
        <begin position="1"/>
        <end position="99"/>
    </location>
</feature>
<sequence>MSSNEKIFSVLRAPRVSEKTARLQEISNQYVFEVSNEATKADVKAAVEQLFDVKVKAVNVVNVKGKSKSFRNRAGNRGNWRKAYVRLVDGQSIDVTAKA</sequence>